<gene>
    <name type="ORF">b129</name>
</gene>
<dbReference type="EMBL" id="X07234">
    <property type="protein sequence ID" value="CAA30197.1"/>
    <property type="molecule type" value="Genomic_DNA"/>
</dbReference>
<dbReference type="PIR" id="S03229">
    <property type="entry name" value="S03229"/>
</dbReference>
<dbReference type="RefSeq" id="NP_039795.1">
    <property type="nucleotide sequence ID" value="NC_001338.1"/>
</dbReference>
<dbReference type="PDB" id="2WBT">
    <property type="method" value="X-ray"/>
    <property type="resolution" value="2.70 A"/>
    <property type="chains" value="A/B=1-129"/>
</dbReference>
<dbReference type="PDBsum" id="2WBT"/>
<dbReference type="SMR" id="P20201"/>
<dbReference type="KEGG" id="vg:2559654"/>
<dbReference type="OrthoDB" id="13567at10239"/>
<dbReference type="EvolutionaryTrace" id="P20201"/>
<dbReference type="Proteomes" id="UP000000854">
    <property type="component" value="Genome"/>
</dbReference>
<dbReference type="GO" id="GO:0008270">
    <property type="term" value="F:zinc ion binding"/>
    <property type="evidence" value="ECO:0007669"/>
    <property type="project" value="UniProtKB-KW"/>
</dbReference>
<dbReference type="Gene3D" id="6.20.390.10">
    <property type="match status" value="1"/>
</dbReference>
<dbReference type="Gene3D" id="3.30.160.60">
    <property type="entry name" value="Classic Zinc Finger"/>
    <property type="match status" value="1"/>
</dbReference>
<dbReference type="InterPro" id="IPR054177">
    <property type="entry name" value="B129_C2H2-Znf"/>
</dbReference>
<dbReference type="InterPro" id="IPR041661">
    <property type="entry name" value="ZN622/Rei1/Reh1_Znf-C2H2"/>
</dbReference>
<dbReference type="InterPro" id="IPR036236">
    <property type="entry name" value="Znf_C2H2_sf"/>
</dbReference>
<dbReference type="InterPro" id="IPR013087">
    <property type="entry name" value="Znf_C2H2_type"/>
</dbReference>
<dbReference type="Pfam" id="PF22034">
    <property type="entry name" value="B129_C2H2-zf"/>
    <property type="match status" value="1"/>
</dbReference>
<dbReference type="Pfam" id="PF12756">
    <property type="entry name" value="zf-C2H2_2"/>
    <property type="match status" value="1"/>
</dbReference>
<dbReference type="SMART" id="SM00355">
    <property type="entry name" value="ZnF_C2H2"/>
    <property type="match status" value="2"/>
</dbReference>
<dbReference type="SUPFAM" id="SSF57667">
    <property type="entry name" value="beta-beta-alpha zinc fingers"/>
    <property type="match status" value="1"/>
</dbReference>
<dbReference type="PROSITE" id="PS00028">
    <property type="entry name" value="ZINC_FINGER_C2H2_1"/>
    <property type="match status" value="2"/>
</dbReference>
<dbReference type="PROSITE" id="PS50157">
    <property type="entry name" value="ZINC_FINGER_C2H2_2"/>
    <property type="match status" value="1"/>
</dbReference>
<evidence type="ECO:0000255" key="1">
    <source>
        <dbReference type="PROSITE-ProRule" id="PRU00042"/>
    </source>
</evidence>
<evidence type="ECO:0000269" key="2">
    <source>
    </source>
</evidence>
<evidence type="ECO:0007829" key="3">
    <source>
        <dbReference type="PDB" id="2WBT"/>
    </source>
</evidence>
<accession>P20201</accession>
<organismHost>
    <name type="scientific">Saccharolobus solfataricus</name>
    <name type="common">Sulfolobus solfataricus</name>
    <dbReference type="NCBI Taxonomy" id="2287"/>
</organismHost>
<protein>
    <recommendedName>
        <fullName>Uncharacterized protein B-129</fullName>
    </recommendedName>
</protein>
<comment type="function">
    <text evidence="2">Essential for virus function.</text>
</comment>
<feature type="chain" id="PRO_0000047834" description="Uncharacterized protein B-129">
    <location>
        <begin position="1"/>
        <end position="129"/>
    </location>
</feature>
<feature type="zinc finger region" description="C2H2-type 1" evidence="1">
    <location>
        <begin position="75"/>
        <end position="99"/>
    </location>
</feature>
<feature type="zinc finger region" description="C2H2-type 2" evidence="1">
    <location>
        <begin position="101"/>
        <end position="124"/>
    </location>
</feature>
<feature type="helix" evidence="3">
    <location>
        <begin position="12"/>
        <end position="15"/>
    </location>
</feature>
<feature type="strand" evidence="3">
    <location>
        <begin position="20"/>
        <end position="23"/>
    </location>
</feature>
<feature type="helix" evidence="3">
    <location>
        <begin position="26"/>
        <end position="32"/>
    </location>
</feature>
<feature type="helix" evidence="3">
    <location>
        <begin position="37"/>
        <end position="52"/>
    </location>
</feature>
<feature type="helix" evidence="3">
    <location>
        <begin position="54"/>
        <end position="56"/>
    </location>
</feature>
<feature type="turn" evidence="3">
    <location>
        <begin position="57"/>
        <end position="59"/>
    </location>
</feature>
<feature type="helix" evidence="3">
    <location>
        <begin position="60"/>
        <end position="72"/>
    </location>
</feature>
<feature type="strand" evidence="3">
    <location>
        <begin position="74"/>
        <end position="76"/>
    </location>
</feature>
<feature type="turn" evidence="3">
    <location>
        <begin position="78"/>
        <end position="80"/>
    </location>
</feature>
<feature type="strand" evidence="3">
    <location>
        <begin position="83"/>
        <end position="86"/>
    </location>
</feature>
<feature type="helix" evidence="3">
    <location>
        <begin position="87"/>
        <end position="96"/>
    </location>
</feature>
<feature type="turn" evidence="3">
    <location>
        <begin position="104"/>
        <end position="106"/>
    </location>
</feature>
<feature type="helix" evidence="3">
    <location>
        <begin position="113"/>
        <end position="122"/>
    </location>
</feature>
<organism>
    <name type="scientific">Sulfolobus spindle-shape virus 1</name>
    <name type="common">SSV1</name>
    <dbReference type="NCBI Taxonomy" id="244589"/>
    <lineage>
        <taxon>Viruses</taxon>
        <taxon>Viruses incertae sedis</taxon>
        <taxon>Fuselloviridae</taxon>
        <taxon>Alphafusellovirus</taxon>
    </lineage>
</organism>
<proteinExistence type="evidence at protein level"/>
<keyword id="KW-0002">3D-structure</keyword>
<keyword id="KW-0479">Metal-binding</keyword>
<keyword id="KW-1185">Reference proteome</keyword>
<keyword id="KW-0677">Repeat</keyword>
<keyword id="KW-0862">Zinc</keyword>
<keyword id="KW-0863">Zinc-finger</keyword>
<name>B129_SSV1</name>
<sequence length="129" mass="14804">MTESDVDSGSKKYLSNHKGIFIHVTLEELKRYHQLTPEQKRLIRAIVKTLIHNPQLLDESSYLYRLLASKAISQFVCPLCLMPFSSSVSLKQHIRYTEHTKVCPVCKKEFTSTDSALDHVCKKHNICVS</sequence>
<reference key="1">
    <citation type="journal article" date="1991" name="Virology">
        <title>Complete nucleotide sequence of the virus SSV1 of the archaebacterium Sulfolobus shibatae.</title>
        <authorList>
            <person name="Palm P."/>
            <person name="Schleper C."/>
            <person name="Grampp B."/>
            <person name="Yeats S."/>
            <person name="McWilliam P."/>
            <person name="Reiter W.-D."/>
            <person name="Zillig W."/>
        </authorList>
    </citation>
    <scope>NUCLEOTIDE SEQUENCE [GENOMIC DNA]</scope>
</reference>
<reference key="2">
    <citation type="journal article" date="1999" name="Genetics">
        <title>Genetic requirements for the function of the archaeal virus SSV1 in Sulfolobus solfataricus: construction and testing of viral shuttle vectors.</title>
        <authorList>
            <person name="Stedman K.M."/>
            <person name="Schleper C."/>
            <person name="Rumpf E."/>
            <person name="Zillig W."/>
        </authorList>
    </citation>
    <scope>FUNCTION</scope>
</reference>